<sequence length="87" mass="9630">MSASADSLGAAAALDKYGDEDIFSLLIRYGLYVGALFQFVCISAAVLMENNPDGQSNPESGEVTEREGEPVRTRLHKIRKLEKKKRR</sequence>
<dbReference type="EMBL" id="AJ250305">
    <property type="protein sequence ID" value="CAB58344.1"/>
    <property type="molecule type" value="Genomic_DNA"/>
</dbReference>
<dbReference type="EMBL" id="AJ250306">
    <property type="protein sequence ID" value="CAB58346.1"/>
    <property type="molecule type" value="Genomic_DNA"/>
</dbReference>
<dbReference type="EMBL" id="AJ250307">
    <property type="protein sequence ID" value="CAB58348.1"/>
    <property type="molecule type" value="Genomic_DNA"/>
</dbReference>
<dbReference type="EMBL" id="AJ011320">
    <property type="protein sequence ID" value="CAA09594.1"/>
    <property type="molecule type" value="Genomic_DNA"/>
</dbReference>
<dbReference type="EMBL" id="AE014296">
    <property type="protein sequence ID" value="AAF49433.1"/>
    <property type="molecule type" value="Genomic_DNA"/>
</dbReference>
<dbReference type="EMBL" id="BT023225">
    <property type="protein sequence ID" value="AAY55641.1"/>
    <property type="molecule type" value="mRNA"/>
</dbReference>
<dbReference type="RefSeq" id="NP_648908.1">
    <property type="nucleotide sequence ID" value="NM_140651.3"/>
</dbReference>
<dbReference type="SMR" id="O77286"/>
<dbReference type="FunCoup" id="O77286">
    <property type="interactions" value="45"/>
</dbReference>
<dbReference type="IntAct" id="O77286">
    <property type="interactions" value="3"/>
</dbReference>
<dbReference type="PaxDb" id="7227-FBpp0075074"/>
<dbReference type="DNASU" id="39857"/>
<dbReference type="EnsemblMetazoa" id="FBtr0075314">
    <property type="protein sequence ID" value="FBpp0075074"/>
    <property type="gene ID" value="FBgn0025558"/>
</dbReference>
<dbReference type="GeneID" id="39857"/>
<dbReference type="KEGG" id="dme:Dmel_CG4101"/>
<dbReference type="UCSC" id="CG4101-RA">
    <property type="organism name" value="d. melanogaster"/>
</dbReference>
<dbReference type="AGR" id="FB:FBgn0025558"/>
<dbReference type="FlyBase" id="FBgn0025558">
    <property type="gene designation" value="CG4101"/>
</dbReference>
<dbReference type="VEuPathDB" id="VectorBase:FBgn0025558"/>
<dbReference type="eggNOG" id="ENOG502S6QI">
    <property type="taxonomic scope" value="Eukaryota"/>
</dbReference>
<dbReference type="GeneTree" id="ENSGT00390000003422"/>
<dbReference type="HOGENOM" id="CLU_189363_0_0_1"/>
<dbReference type="InParanoid" id="O77286"/>
<dbReference type="OMA" id="FQMVCLA"/>
<dbReference type="OrthoDB" id="10040809at2759"/>
<dbReference type="PhylomeDB" id="O77286"/>
<dbReference type="BioGRID-ORCS" id="39857">
    <property type="hits" value="0 hits in 1 CRISPR screen"/>
</dbReference>
<dbReference type="GenomeRNAi" id="39857"/>
<dbReference type="PRO" id="PR:O77286"/>
<dbReference type="Proteomes" id="UP000000803">
    <property type="component" value="Chromosome 3L"/>
</dbReference>
<dbReference type="Bgee" id="FBgn0025558">
    <property type="expression patterns" value="Expressed in T neuron T5d (Drosophila) in embryonic/larval optic lobe (Drosophila) and 160 other cell types or tissues"/>
</dbReference>
<dbReference type="ExpressionAtlas" id="O77286">
    <property type="expression patterns" value="baseline and differential"/>
</dbReference>
<dbReference type="GO" id="GO:0016020">
    <property type="term" value="C:membrane"/>
    <property type="evidence" value="ECO:0007669"/>
    <property type="project" value="UniProtKB-SubCell"/>
</dbReference>
<dbReference type="InterPro" id="IPR009621">
    <property type="entry name" value="UPF0239"/>
</dbReference>
<dbReference type="PANTHER" id="PTHR14409">
    <property type="entry name" value="MANNOSIDASE, BETA A, LYSOSOMAL-LIKE, MANBAL PROTEIN"/>
    <property type="match status" value="1"/>
</dbReference>
<dbReference type="PANTHER" id="PTHR14409:SF0">
    <property type="entry name" value="PROTEIN MANBAL"/>
    <property type="match status" value="1"/>
</dbReference>
<dbReference type="Pfam" id="PF06783">
    <property type="entry name" value="UPF0239"/>
    <property type="match status" value="1"/>
</dbReference>
<organism>
    <name type="scientific">Drosophila melanogaster</name>
    <name type="common">Fruit fly</name>
    <dbReference type="NCBI Taxonomy" id="7227"/>
    <lineage>
        <taxon>Eukaryota</taxon>
        <taxon>Metazoa</taxon>
        <taxon>Ecdysozoa</taxon>
        <taxon>Arthropoda</taxon>
        <taxon>Hexapoda</taxon>
        <taxon>Insecta</taxon>
        <taxon>Pterygota</taxon>
        <taxon>Neoptera</taxon>
        <taxon>Endopterygota</taxon>
        <taxon>Diptera</taxon>
        <taxon>Brachycera</taxon>
        <taxon>Muscomorpha</taxon>
        <taxon>Ephydroidea</taxon>
        <taxon>Drosophilidae</taxon>
        <taxon>Drosophila</taxon>
        <taxon>Sophophora</taxon>
    </lineage>
</organism>
<reference key="1">
    <citation type="journal article" date="2001" name="Mol. Genet. Genomics">
        <title>Genetic and molecular features of Su(P), a gene that interacts with ref(2)P in male fertility of Drosophila melanogaster.</title>
        <authorList>
            <person name="Bichon A."/>
            <person name="Boukhatem N."/>
            <person name="Gay P."/>
            <person name="Dru P."/>
            <person name="Terzian H."/>
            <person name="Petitjean A.-M."/>
            <person name="Lemeunier F."/>
            <person name="Contamine D."/>
        </authorList>
    </citation>
    <scope>NUCLEOTIDE SEQUENCE [GENOMIC DNA]</scope>
    <source>
        <strain>PE</strain>
        <strain>PR</strain>
        <strain>VE</strain>
    </source>
</reference>
<reference key="2">
    <citation type="journal article" date="2000" name="Science">
        <title>The genome sequence of Drosophila melanogaster.</title>
        <authorList>
            <person name="Adams M.D."/>
            <person name="Celniker S.E."/>
            <person name="Holt R.A."/>
            <person name="Evans C.A."/>
            <person name="Gocayne J.D."/>
            <person name="Amanatides P.G."/>
            <person name="Scherer S.E."/>
            <person name="Li P.W."/>
            <person name="Hoskins R.A."/>
            <person name="Galle R.F."/>
            <person name="George R.A."/>
            <person name="Lewis S.E."/>
            <person name="Richards S."/>
            <person name="Ashburner M."/>
            <person name="Henderson S.N."/>
            <person name="Sutton G.G."/>
            <person name="Wortman J.R."/>
            <person name="Yandell M.D."/>
            <person name="Zhang Q."/>
            <person name="Chen L.X."/>
            <person name="Brandon R.C."/>
            <person name="Rogers Y.-H.C."/>
            <person name="Blazej R.G."/>
            <person name="Champe M."/>
            <person name="Pfeiffer B.D."/>
            <person name="Wan K.H."/>
            <person name="Doyle C."/>
            <person name="Baxter E.G."/>
            <person name="Helt G."/>
            <person name="Nelson C.R."/>
            <person name="Miklos G.L.G."/>
            <person name="Abril J.F."/>
            <person name="Agbayani A."/>
            <person name="An H.-J."/>
            <person name="Andrews-Pfannkoch C."/>
            <person name="Baldwin D."/>
            <person name="Ballew R.M."/>
            <person name="Basu A."/>
            <person name="Baxendale J."/>
            <person name="Bayraktaroglu L."/>
            <person name="Beasley E.M."/>
            <person name="Beeson K.Y."/>
            <person name="Benos P.V."/>
            <person name="Berman B.P."/>
            <person name="Bhandari D."/>
            <person name="Bolshakov S."/>
            <person name="Borkova D."/>
            <person name="Botchan M.R."/>
            <person name="Bouck J."/>
            <person name="Brokstein P."/>
            <person name="Brottier P."/>
            <person name="Burtis K.C."/>
            <person name="Busam D.A."/>
            <person name="Butler H."/>
            <person name="Cadieu E."/>
            <person name="Center A."/>
            <person name="Chandra I."/>
            <person name="Cherry J.M."/>
            <person name="Cawley S."/>
            <person name="Dahlke C."/>
            <person name="Davenport L.B."/>
            <person name="Davies P."/>
            <person name="de Pablos B."/>
            <person name="Delcher A."/>
            <person name="Deng Z."/>
            <person name="Mays A.D."/>
            <person name="Dew I."/>
            <person name="Dietz S.M."/>
            <person name="Dodson K."/>
            <person name="Doup L.E."/>
            <person name="Downes M."/>
            <person name="Dugan-Rocha S."/>
            <person name="Dunkov B.C."/>
            <person name="Dunn P."/>
            <person name="Durbin K.J."/>
            <person name="Evangelista C.C."/>
            <person name="Ferraz C."/>
            <person name="Ferriera S."/>
            <person name="Fleischmann W."/>
            <person name="Fosler C."/>
            <person name="Gabrielian A.E."/>
            <person name="Garg N.S."/>
            <person name="Gelbart W.M."/>
            <person name="Glasser K."/>
            <person name="Glodek A."/>
            <person name="Gong F."/>
            <person name="Gorrell J.H."/>
            <person name="Gu Z."/>
            <person name="Guan P."/>
            <person name="Harris M."/>
            <person name="Harris N.L."/>
            <person name="Harvey D.A."/>
            <person name="Heiman T.J."/>
            <person name="Hernandez J.R."/>
            <person name="Houck J."/>
            <person name="Hostin D."/>
            <person name="Houston K.A."/>
            <person name="Howland T.J."/>
            <person name="Wei M.-H."/>
            <person name="Ibegwam C."/>
            <person name="Jalali M."/>
            <person name="Kalush F."/>
            <person name="Karpen G.H."/>
            <person name="Ke Z."/>
            <person name="Kennison J.A."/>
            <person name="Ketchum K.A."/>
            <person name="Kimmel B.E."/>
            <person name="Kodira C.D."/>
            <person name="Kraft C.L."/>
            <person name="Kravitz S."/>
            <person name="Kulp D."/>
            <person name="Lai Z."/>
            <person name="Lasko P."/>
            <person name="Lei Y."/>
            <person name="Levitsky A.A."/>
            <person name="Li J.H."/>
            <person name="Li Z."/>
            <person name="Liang Y."/>
            <person name="Lin X."/>
            <person name="Liu X."/>
            <person name="Mattei B."/>
            <person name="McIntosh T.C."/>
            <person name="McLeod M.P."/>
            <person name="McPherson D."/>
            <person name="Merkulov G."/>
            <person name="Milshina N.V."/>
            <person name="Mobarry C."/>
            <person name="Morris J."/>
            <person name="Moshrefi A."/>
            <person name="Mount S.M."/>
            <person name="Moy M."/>
            <person name="Murphy B."/>
            <person name="Murphy L."/>
            <person name="Muzny D.M."/>
            <person name="Nelson D.L."/>
            <person name="Nelson D.R."/>
            <person name="Nelson K.A."/>
            <person name="Nixon K."/>
            <person name="Nusskern D.R."/>
            <person name="Pacleb J.M."/>
            <person name="Palazzolo M."/>
            <person name="Pittman G.S."/>
            <person name="Pan S."/>
            <person name="Pollard J."/>
            <person name="Puri V."/>
            <person name="Reese M.G."/>
            <person name="Reinert K."/>
            <person name="Remington K."/>
            <person name="Saunders R.D.C."/>
            <person name="Scheeler F."/>
            <person name="Shen H."/>
            <person name="Shue B.C."/>
            <person name="Siden-Kiamos I."/>
            <person name="Simpson M."/>
            <person name="Skupski M.P."/>
            <person name="Smith T.J."/>
            <person name="Spier E."/>
            <person name="Spradling A.C."/>
            <person name="Stapleton M."/>
            <person name="Strong R."/>
            <person name="Sun E."/>
            <person name="Svirskas R."/>
            <person name="Tector C."/>
            <person name="Turner R."/>
            <person name="Venter E."/>
            <person name="Wang A.H."/>
            <person name="Wang X."/>
            <person name="Wang Z.-Y."/>
            <person name="Wassarman D.A."/>
            <person name="Weinstock G.M."/>
            <person name="Weissenbach J."/>
            <person name="Williams S.M."/>
            <person name="Woodage T."/>
            <person name="Worley K.C."/>
            <person name="Wu D."/>
            <person name="Yang S."/>
            <person name="Yao Q.A."/>
            <person name="Ye J."/>
            <person name="Yeh R.-F."/>
            <person name="Zaveri J.S."/>
            <person name="Zhan M."/>
            <person name="Zhang G."/>
            <person name="Zhao Q."/>
            <person name="Zheng L."/>
            <person name="Zheng X.H."/>
            <person name="Zhong F.N."/>
            <person name="Zhong W."/>
            <person name="Zhou X."/>
            <person name="Zhu S.C."/>
            <person name="Zhu X."/>
            <person name="Smith H.O."/>
            <person name="Gibbs R.A."/>
            <person name="Myers E.W."/>
            <person name="Rubin G.M."/>
            <person name="Venter J.C."/>
        </authorList>
    </citation>
    <scope>NUCLEOTIDE SEQUENCE [LARGE SCALE GENOMIC DNA]</scope>
    <source>
        <strain>Berkeley</strain>
    </source>
</reference>
<reference key="3">
    <citation type="journal article" date="2002" name="Genome Biol.">
        <title>Annotation of the Drosophila melanogaster euchromatic genome: a systematic review.</title>
        <authorList>
            <person name="Misra S."/>
            <person name="Crosby M.A."/>
            <person name="Mungall C.J."/>
            <person name="Matthews B.B."/>
            <person name="Campbell K.S."/>
            <person name="Hradecky P."/>
            <person name="Huang Y."/>
            <person name="Kaminker J.S."/>
            <person name="Millburn G.H."/>
            <person name="Prochnik S.E."/>
            <person name="Smith C.D."/>
            <person name="Tupy J.L."/>
            <person name="Whitfield E.J."/>
            <person name="Bayraktaroglu L."/>
            <person name="Berman B.P."/>
            <person name="Bettencourt B.R."/>
            <person name="Celniker S.E."/>
            <person name="de Grey A.D.N.J."/>
            <person name="Drysdale R.A."/>
            <person name="Harris N.L."/>
            <person name="Richter J."/>
            <person name="Russo S."/>
            <person name="Schroeder A.J."/>
            <person name="Shu S.Q."/>
            <person name="Stapleton M."/>
            <person name="Yamada C."/>
            <person name="Ashburner M."/>
            <person name="Gelbart W.M."/>
            <person name="Rubin G.M."/>
            <person name="Lewis S.E."/>
        </authorList>
    </citation>
    <scope>GENOME REANNOTATION</scope>
    <source>
        <strain>Berkeley</strain>
    </source>
</reference>
<reference key="4">
    <citation type="submission" date="2005-05" db="EMBL/GenBank/DDBJ databases">
        <authorList>
            <person name="Stapleton M."/>
            <person name="Carlson J.W."/>
            <person name="Chavez C."/>
            <person name="Frise E."/>
            <person name="George R.A."/>
            <person name="Pacleb J.M."/>
            <person name="Park S."/>
            <person name="Wan K.H."/>
            <person name="Yu C."/>
            <person name="Celniker S.E."/>
        </authorList>
    </citation>
    <scope>NUCLEOTIDE SEQUENCE [LARGE SCALE MRNA]</scope>
    <source>
        <strain>Berkeley</strain>
    </source>
</reference>
<keyword id="KW-0472">Membrane</keyword>
<keyword id="KW-1185">Reference proteome</keyword>
<keyword id="KW-0812">Transmembrane</keyword>
<keyword id="KW-1133">Transmembrane helix</keyword>
<gene>
    <name type="primary">anon-73B1</name>
    <name type="synonym">anon73B1</name>
    <name type="ORF">CG4101</name>
</gene>
<evidence type="ECO:0000255" key="1"/>
<evidence type="ECO:0000256" key="2">
    <source>
        <dbReference type="SAM" id="MobiDB-lite"/>
    </source>
</evidence>
<evidence type="ECO:0000305" key="3"/>
<protein>
    <recommendedName>
        <fullName>Protein anon-73B1</fullName>
    </recommendedName>
</protein>
<proteinExistence type="inferred from homology"/>
<name>U239_DROME</name>
<feature type="chain" id="PRO_0000194182" description="Protein anon-73B1">
    <location>
        <begin position="1"/>
        <end position="87"/>
    </location>
</feature>
<feature type="transmembrane region" description="Helical" evidence="1">
    <location>
        <begin position="25"/>
        <end position="47"/>
    </location>
</feature>
<feature type="region of interest" description="Disordered" evidence="2">
    <location>
        <begin position="51"/>
        <end position="87"/>
    </location>
</feature>
<feature type="compositionally biased region" description="Basic and acidic residues" evidence="2">
    <location>
        <begin position="63"/>
        <end position="72"/>
    </location>
</feature>
<feature type="compositionally biased region" description="Basic residues" evidence="2">
    <location>
        <begin position="73"/>
        <end position="87"/>
    </location>
</feature>
<accession>O77286</accession>
<accession>Q4V3Y1</accession>
<comment type="subcellular location">
    <subcellularLocation>
        <location evidence="3">Membrane</location>
        <topology evidence="3">Single-pass membrane protein</topology>
    </subcellularLocation>
</comment>
<comment type="similarity">
    <text evidence="3">Belongs to the UPF0239 family.</text>
</comment>